<sequence length="546" mass="63239">MTPGEVRRLYFIIRTFLSYGLDELIPRMRLTLPLRLWRYSLFWMPNRHKDKLLGERLRLALQELGPVWIKFGQMLSTRRDLFPPQIADQLALLQDKVAPFDGRLAKAQIEEAMGGLPVEAWFDDFDIQPLASASIAQVHTARLKSNGKEVVIKVIRPDILPVIQADLKLIYRLARWVPRLLPDGRRLRPTEVVREYEKTLIDELNLLRESANAIQLRRNFENSPMLYIPEVYSDYCSQNMMVMERIYGIPVSDVAALEKNGTNMKLLAERGVKVFFTQVFRDSFFHADMHPGNIFVSHEHPENPQYIGIDCGIVGSLNKEDKRYLAENFIAFFNRDYRKVAELHVDSGWVPPDTNVEDFEFAIRTVCEPIFEKPLAEISFGHVLLNLFNTARRFNMEVQPQLVLLQKTLLYVEGVGRQLYPQLDLWKTAKPFLESWIKDQVGIPALTRALKEKAPFWVEKMPEIPELVYDSLRQGKYLQHSVDKIARELQVNHVRQSQSRYLLGIGATLLLSGSFLLVNRPEWGLMPGWLMVGGVVVWLVGWRKTR</sequence>
<comment type="function">
    <text evidence="1">Is probably a protein kinase regulator of UbiI activity which is involved in aerobic coenzyme Q (ubiquinone) biosynthesis.</text>
</comment>
<comment type="pathway">
    <text>Cofactor biosynthesis; ubiquinone biosynthesis [regulation].</text>
</comment>
<comment type="subcellular location">
    <subcellularLocation>
        <location evidence="1">Cell inner membrane</location>
        <topology evidence="1">Multi-pass membrane protein</topology>
    </subcellularLocation>
</comment>
<comment type="similarity">
    <text evidence="1">Belongs to the ABC1 family. UbiB subfamily.</text>
</comment>
<dbReference type="EC" id="2.7.-.-" evidence="1"/>
<dbReference type="EMBL" id="AE017220">
    <property type="protein sequence ID" value="AAX67776.1"/>
    <property type="molecule type" value="Genomic_DNA"/>
</dbReference>
<dbReference type="RefSeq" id="WP_000187559.1">
    <property type="nucleotide sequence ID" value="NC_006905.1"/>
</dbReference>
<dbReference type="SMR" id="Q57HN6"/>
<dbReference type="KEGG" id="sec:SCH_3870"/>
<dbReference type="HOGENOM" id="CLU_006533_0_0_6"/>
<dbReference type="UniPathway" id="UPA00232"/>
<dbReference type="Proteomes" id="UP000000538">
    <property type="component" value="Chromosome"/>
</dbReference>
<dbReference type="GO" id="GO:0005886">
    <property type="term" value="C:plasma membrane"/>
    <property type="evidence" value="ECO:0007669"/>
    <property type="project" value="UniProtKB-SubCell"/>
</dbReference>
<dbReference type="GO" id="GO:0005524">
    <property type="term" value="F:ATP binding"/>
    <property type="evidence" value="ECO:0007669"/>
    <property type="project" value="UniProtKB-KW"/>
</dbReference>
<dbReference type="GO" id="GO:0004672">
    <property type="term" value="F:protein kinase activity"/>
    <property type="evidence" value="ECO:0007669"/>
    <property type="project" value="UniProtKB-UniRule"/>
</dbReference>
<dbReference type="GO" id="GO:0010795">
    <property type="term" value="P:regulation of ubiquinone biosynthetic process"/>
    <property type="evidence" value="ECO:0007669"/>
    <property type="project" value="UniProtKB-UniRule"/>
</dbReference>
<dbReference type="GO" id="GO:0006744">
    <property type="term" value="P:ubiquinone biosynthetic process"/>
    <property type="evidence" value="ECO:0007669"/>
    <property type="project" value="UniProtKB-UniPathway"/>
</dbReference>
<dbReference type="CDD" id="cd13972">
    <property type="entry name" value="UbiB"/>
    <property type="match status" value="1"/>
</dbReference>
<dbReference type="HAMAP" id="MF_00414">
    <property type="entry name" value="UbiB"/>
    <property type="match status" value="1"/>
</dbReference>
<dbReference type="InterPro" id="IPR004147">
    <property type="entry name" value="ABC1_dom"/>
</dbReference>
<dbReference type="InterPro" id="IPR011009">
    <property type="entry name" value="Kinase-like_dom_sf"/>
</dbReference>
<dbReference type="InterPro" id="IPR010232">
    <property type="entry name" value="UbiB"/>
</dbReference>
<dbReference type="InterPro" id="IPR045308">
    <property type="entry name" value="UbiB_bact"/>
</dbReference>
<dbReference type="InterPro" id="IPR050154">
    <property type="entry name" value="UbiB_kinase"/>
</dbReference>
<dbReference type="NCBIfam" id="NF003404">
    <property type="entry name" value="PRK04750.1"/>
    <property type="match status" value="1"/>
</dbReference>
<dbReference type="NCBIfam" id="TIGR01982">
    <property type="entry name" value="UbiB"/>
    <property type="match status" value="1"/>
</dbReference>
<dbReference type="PANTHER" id="PTHR10566">
    <property type="entry name" value="CHAPERONE-ACTIVITY OF BC1 COMPLEX CABC1 -RELATED"/>
    <property type="match status" value="1"/>
</dbReference>
<dbReference type="PANTHER" id="PTHR10566:SF113">
    <property type="entry name" value="PROTEIN ACTIVITY OF BC1 COMPLEX KINASE 7, CHLOROPLASTIC"/>
    <property type="match status" value="1"/>
</dbReference>
<dbReference type="Pfam" id="PF03109">
    <property type="entry name" value="ABC1"/>
    <property type="match status" value="1"/>
</dbReference>
<dbReference type="SUPFAM" id="SSF56112">
    <property type="entry name" value="Protein kinase-like (PK-like)"/>
    <property type="match status" value="1"/>
</dbReference>
<reference key="1">
    <citation type="journal article" date="2005" name="Nucleic Acids Res.">
        <title>The genome sequence of Salmonella enterica serovar Choleraesuis, a highly invasive and resistant zoonotic pathogen.</title>
        <authorList>
            <person name="Chiu C.-H."/>
            <person name="Tang P."/>
            <person name="Chu C."/>
            <person name="Hu S."/>
            <person name="Bao Q."/>
            <person name="Yu J."/>
            <person name="Chou Y.-Y."/>
            <person name="Wang H.-S."/>
            <person name="Lee Y.-S."/>
        </authorList>
    </citation>
    <scope>NUCLEOTIDE SEQUENCE [LARGE SCALE GENOMIC DNA]</scope>
    <source>
        <strain>SC-B67</strain>
    </source>
</reference>
<keyword id="KW-0067">ATP-binding</keyword>
<keyword id="KW-0997">Cell inner membrane</keyword>
<keyword id="KW-1003">Cell membrane</keyword>
<keyword id="KW-0418">Kinase</keyword>
<keyword id="KW-0472">Membrane</keyword>
<keyword id="KW-0547">Nucleotide-binding</keyword>
<keyword id="KW-0808">Transferase</keyword>
<keyword id="KW-0812">Transmembrane</keyword>
<keyword id="KW-1133">Transmembrane helix</keyword>
<keyword id="KW-0831">Ubiquinone biosynthesis</keyword>
<protein>
    <recommendedName>
        <fullName evidence="1">Probable protein kinase UbiB</fullName>
        <ecNumber evidence="1">2.7.-.-</ecNumber>
    </recommendedName>
    <alternativeName>
        <fullName evidence="1">Ubiquinone biosynthesis protein UbiB</fullName>
    </alternativeName>
</protein>
<gene>
    <name evidence="1" type="primary">ubiB</name>
    <name type="ordered locus">SCH_3870</name>
</gene>
<feature type="chain" id="PRO_1000050053" description="Probable protein kinase UbiB">
    <location>
        <begin position="1"/>
        <end position="546"/>
    </location>
</feature>
<feature type="transmembrane region" description="Helical" evidence="1">
    <location>
        <begin position="501"/>
        <end position="521"/>
    </location>
</feature>
<feature type="transmembrane region" description="Helical" evidence="1">
    <location>
        <begin position="522"/>
        <end position="542"/>
    </location>
</feature>
<feature type="domain" description="Protein kinase" evidence="1">
    <location>
        <begin position="124"/>
        <end position="502"/>
    </location>
</feature>
<feature type="active site" description="Proton acceptor" evidence="1">
    <location>
        <position position="288"/>
    </location>
</feature>
<feature type="binding site" evidence="1">
    <location>
        <begin position="130"/>
        <end position="138"/>
    </location>
    <ligand>
        <name>ATP</name>
        <dbReference type="ChEBI" id="CHEBI:30616"/>
    </ligand>
</feature>
<feature type="binding site" evidence="1">
    <location>
        <position position="153"/>
    </location>
    <ligand>
        <name>ATP</name>
        <dbReference type="ChEBI" id="CHEBI:30616"/>
    </ligand>
</feature>
<proteinExistence type="inferred from homology"/>
<organism>
    <name type="scientific">Salmonella choleraesuis (strain SC-B67)</name>
    <dbReference type="NCBI Taxonomy" id="321314"/>
    <lineage>
        <taxon>Bacteria</taxon>
        <taxon>Pseudomonadati</taxon>
        <taxon>Pseudomonadota</taxon>
        <taxon>Gammaproteobacteria</taxon>
        <taxon>Enterobacterales</taxon>
        <taxon>Enterobacteriaceae</taxon>
        <taxon>Salmonella</taxon>
    </lineage>
</organism>
<evidence type="ECO:0000255" key="1">
    <source>
        <dbReference type="HAMAP-Rule" id="MF_00414"/>
    </source>
</evidence>
<accession>Q57HN6</accession>
<name>UBIB_SALCH</name>